<accession>D5K8A2</accession>
<reference key="1">
    <citation type="submission" date="2010-01" db="EMBL/GenBank/DDBJ databases">
        <authorList>
            <person name="Liu Y.G."/>
        </authorList>
    </citation>
    <scope>NUCLEOTIDE SEQUENCE [MRNA]</scope>
</reference>
<dbReference type="EMBL" id="GU475004">
    <property type="protein sequence ID" value="ADE28540.1"/>
    <property type="molecule type" value="mRNA"/>
</dbReference>
<dbReference type="RefSeq" id="NP_001171386.1">
    <property type="nucleotide sequence ID" value="NM_001177915.1"/>
</dbReference>
<dbReference type="SMR" id="D5K8A2"/>
<dbReference type="FunCoup" id="D5K8A2">
    <property type="interactions" value="125"/>
</dbReference>
<dbReference type="STRING" id="9823.ENSSSCP00000072678"/>
<dbReference type="PaxDb" id="9823-ENSSSCP00000009421"/>
<dbReference type="PeptideAtlas" id="D5K8A2"/>
<dbReference type="Ensembl" id="ENSSSCT00110041880">
    <property type="protein sequence ID" value="ENSSSCP00110029379"/>
    <property type="gene ID" value="ENSSSCG00110021608"/>
</dbReference>
<dbReference type="Ensembl" id="ENSSSCT00115005921">
    <property type="protein sequence ID" value="ENSSSCP00115005515"/>
    <property type="gene ID" value="ENSSSCG00115003505"/>
</dbReference>
<dbReference type="Ensembl" id="ENSSSCT00130027981">
    <property type="protein sequence ID" value="ENSSSCP00130019092"/>
    <property type="gene ID" value="ENSSSCG00130014058"/>
</dbReference>
<dbReference type="GeneID" id="100415808"/>
<dbReference type="KEGG" id="ssc:100415808"/>
<dbReference type="CTD" id="132671"/>
<dbReference type="eggNOG" id="ENOG502QQMJ">
    <property type="taxonomic scope" value="Eukaryota"/>
</dbReference>
<dbReference type="InParanoid" id="D5K8A2"/>
<dbReference type="OrthoDB" id="5966837at2759"/>
<dbReference type="Proteomes" id="UP000008227">
    <property type="component" value="Unplaced"/>
</dbReference>
<dbReference type="Proteomes" id="UP000314985">
    <property type="component" value="Unplaced"/>
</dbReference>
<dbReference type="Proteomes" id="UP000694570">
    <property type="component" value="Unplaced"/>
</dbReference>
<dbReference type="Proteomes" id="UP000694571">
    <property type="component" value="Unplaced"/>
</dbReference>
<dbReference type="Proteomes" id="UP000694720">
    <property type="component" value="Unplaced"/>
</dbReference>
<dbReference type="Proteomes" id="UP000694722">
    <property type="component" value="Unplaced"/>
</dbReference>
<dbReference type="Proteomes" id="UP000694723">
    <property type="component" value="Unplaced"/>
</dbReference>
<dbReference type="Proteomes" id="UP000694724">
    <property type="component" value="Unplaced"/>
</dbReference>
<dbReference type="Proteomes" id="UP000694725">
    <property type="component" value="Unplaced"/>
</dbReference>
<dbReference type="Proteomes" id="UP000694726">
    <property type="component" value="Unplaced"/>
</dbReference>
<dbReference type="Proteomes" id="UP000694727">
    <property type="component" value="Unplaced"/>
</dbReference>
<dbReference type="Proteomes" id="UP000694728">
    <property type="component" value="Unplaced"/>
</dbReference>
<dbReference type="GO" id="GO:0005737">
    <property type="term" value="C:cytoplasm"/>
    <property type="evidence" value="ECO:0000250"/>
    <property type="project" value="UniProtKB"/>
</dbReference>
<dbReference type="GO" id="GO:0005829">
    <property type="term" value="C:cytosol"/>
    <property type="evidence" value="ECO:0007669"/>
    <property type="project" value="UniProtKB-SubCell"/>
</dbReference>
<dbReference type="GO" id="GO:0043231">
    <property type="term" value="C:intracellular membrane-bounded organelle"/>
    <property type="evidence" value="ECO:0000250"/>
    <property type="project" value="UniProtKB"/>
</dbReference>
<dbReference type="GO" id="GO:0005759">
    <property type="term" value="C:mitochondrial matrix"/>
    <property type="evidence" value="ECO:0000250"/>
    <property type="project" value="UniProtKB"/>
</dbReference>
<dbReference type="GO" id="GO:0005741">
    <property type="term" value="C:mitochondrial outer membrane"/>
    <property type="evidence" value="ECO:0000318"/>
    <property type="project" value="GO_Central"/>
</dbReference>
<dbReference type="GO" id="GO:0005739">
    <property type="term" value="C:mitochondrion"/>
    <property type="evidence" value="ECO:0000250"/>
    <property type="project" value="UniProtKB"/>
</dbReference>
<dbReference type="GO" id="GO:1901612">
    <property type="term" value="F:cardiolipin binding"/>
    <property type="evidence" value="ECO:0000250"/>
    <property type="project" value="UniProtKB"/>
</dbReference>
<dbReference type="GO" id="GO:0035694">
    <property type="term" value="P:mitochondrial protein catabolic process"/>
    <property type="evidence" value="ECO:0000250"/>
    <property type="project" value="UniProtKB"/>
</dbReference>
<dbReference type="GO" id="GO:0035695">
    <property type="term" value="P:mitophagy by internal vacuole formation"/>
    <property type="evidence" value="ECO:0000318"/>
    <property type="project" value="GO_Central"/>
</dbReference>
<dbReference type="InterPro" id="IPR026169">
    <property type="entry name" value="MIEAP"/>
</dbReference>
<dbReference type="InterPro" id="IPR031981">
    <property type="entry name" value="MIEAP_C"/>
</dbReference>
<dbReference type="PANTHER" id="PTHR21771:SF0">
    <property type="entry name" value="MITOCHONDRIA-EATING PROTEIN"/>
    <property type="match status" value="1"/>
</dbReference>
<dbReference type="PANTHER" id="PTHR21771">
    <property type="entry name" value="MITOCHONDRIA-EATING PROTEIN-RELATED"/>
    <property type="match status" value="1"/>
</dbReference>
<dbReference type="Pfam" id="PF16026">
    <property type="entry name" value="MIEAP"/>
    <property type="match status" value="1"/>
</dbReference>
<keyword id="KW-0175">Coiled coil</keyword>
<keyword id="KW-0963">Cytoplasm</keyword>
<keyword id="KW-0446">Lipid-binding</keyword>
<keyword id="KW-0472">Membrane</keyword>
<keyword id="KW-0496">Mitochondrion</keyword>
<keyword id="KW-1000">Mitochondrion outer membrane</keyword>
<keyword id="KW-0597">Phosphoprotein</keyword>
<keyword id="KW-1185">Reference proteome</keyword>
<comment type="function">
    <text evidence="2">Key regulator of mitochondrial quality that mediates the repairing or degradation of unhealthy mitochondria in response to mitochondrial damage. Mediator of mitochondrial protein catabolic process (also named MALM) by mediating the degradation of damaged proteins inside mitochondria by promoting the accumulation in the mitochondrial matrix of hydrolases that are characteristic of the lysosomal lumen. Also involved in mitochondrion degradation of damaged mitochondria by promoting the formation of vacuole-like structures (named MIV), which engulf and degrade unhealthy mitochondria by accumulating lysosomes. The physical interaction of SPATA18/MIEAP, BNIP3 and BNIP3L/NIX at the mitochondrial outer membrane regulates the opening of a pore in the mitochondrial double membrane in order to mediate the translocation of lysosomal proteins from the cytoplasm to the mitochondrial matrix. Binds cardiolipin. May form molecular condensates (non-membrane-bounded organelles) within mitochondria that compartmentalize and promote cardiolipin metabolism.</text>
</comment>
<comment type="subunit">
    <text evidence="2">Interacts (via coiled-coil domains) with BNIP3L (via BH3 domain). Interacts (via coiled-coil domains) with BNIP3 (via BH3 domain). Interacts with YWHAG/14-3-3 protein gamma; a protein that also plays a role in MALM.</text>
</comment>
<comment type="subcellular location">
    <subcellularLocation>
        <location evidence="2">Cytoplasm</location>
        <location evidence="2">Cytosol</location>
    </subcellularLocation>
    <subcellularLocation>
        <location evidence="2">Mitochondrion outer membrane</location>
    </subcellularLocation>
    <subcellularLocation>
        <location evidence="2">Mitochondrion matrix</location>
    </subcellularLocation>
    <text evidence="2">Localizes to the cytosol under normal conditions. Relocalizes to mitochondrion outer membrane following cellular stress. May form molecular condensates in the mitochondrial matrix. Colocalizes with BNIP3 and BNIP3L at the mitochondrion outer membrane.</text>
</comment>
<comment type="similarity">
    <text evidence="5">Belongs to the MIEAP family.</text>
</comment>
<gene>
    <name type="primary">SPATA18</name>
    <name type="synonym">MIEAP</name>
</gene>
<organism>
    <name type="scientific">Sus scrofa</name>
    <name type="common">Pig</name>
    <dbReference type="NCBI Taxonomy" id="9823"/>
    <lineage>
        <taxon>Eukaryota</taxon>
        <taxon>Metazoa</taxon>
        <taxon>Chordata</taxon>
        <taxon>Craniata</taxon>
        <taxon>Vertebrata</taxon>
        <taxon>Euteleostomi</taxon>
        <taxon>Mammalia</taxon>
        <taxon>Eutheria</taxon>
        <taxon>Laurasiatheria</taxon>
        <taxon>Artiodactyla</taxon>
        <taxon>Suina</taxon>
        <taxon>Suidae</taxon>
        <taxon>Sus</taxon>
    </lineage>
</organism>
<protein>
    <recommendedName>
        <fullName>Mitochondria-eating protein</fullName>
    </recommendedName>
    <alternativeName>
        <fullName>Spermatogenesis-associated protein 18</fullName>
    </alternativeName>
</protein>
<feature type="chain" id="PRO_0000408330" description="Mitochondria-eating protein">
    <location>
        <begin position="1"/>
        <end position="560"/>
    </location>
</feature>
<feature type="region of interest" description="Interaction with YWHAG/14-3-3 protein gamma" evidence="2">
    <location>
        <begin position="1"/>
        <end position="294"/>
    </location>
</feature>
<feature type="region of interest" description="Disordered" evidence="4">
    <location>
        <begin position="178"/>
        <end position="217"/>
    </location>
</feature>
<feature type="region of interest" description="Disordered" evidence="4">
    <location>
        <begin position="243"/>
        <end position="316"/>
    </location>
</feature>
<feature type="coiled-coil region" evidence="3">
    <location>
        <begin position="118"/>
        <end position="186"/>
    </location>
</feature>
<feature type="coiled-coil region" evidence="3">
    <location>
        <begin position="223"/>
        <end position="248"/>
    </location>
</feature>
<feature type="compositionally biased region" description="Basic and acidic residues" evidence="4">
    <location>
        <begin position="181"/>
        <end position="209"/>
    </location>
</feature>
<feature type="compositionally biased region" description="Low complexity" evidence="4">
    <location>
        <begin position="248"/>
        <end position="262"/>
    </location>
</feature>
<feature type="compositionally biased region" description="Basic residues" evidence="4">
    <location>
        <begin position="263"/>
        <end position="293"/>
    </location>
</feature>
<feature type="compositionally biased region" description="Polar residues" evidence="4">
    <location>
        <begin position="300"/>
        <end position="310"/>
    </location>
</feature>
<feature type="modified residue" description="Phosphoserine" evidence="1">
    <location>
        <position position="13"/>
    </location>
</feature>
<feature type="modified residue" description="Phosphoserine" evidence="1">
    <location>
        <position position="85"/>
    </location>
</feature>
<feature type="modified residue" description="Phosphoserine" evidence="1">
    <location>
        <position position="156"/>
    </location>
</feature>
<feature type="modified residue" description="Phosphoserine" evidence="1">
    <location>
        <position position="159"/>
    </location>
</feature>
<feature type="modified residue" description="Phosphoserine" evidence="1">
    <location>
        <position position="307"/>
    </location>
</feature>
<feature type="modified residue" description="Phosphoserine" evidence="1">
    <location>
        <position position="309"/>
    </location>
</feature>
<feature type="modified residue" description="Phosphoserine" evidence="1">
    <location>
        <position position="531"/>
    </location>
</feature>
<name>MIEAP_PIG</name>
<proteinExistence type="evidence at transcript level"/>
<evidence type="ECO:0000250" key="1">
    <source>
        <dbReference type="UniProtKB" id="Q6AYL6"/>
    </source>
</evidence>
<evidence type="ECO:0000250" key="2">
    <source>
        <dbReference type="UniProtKB" id="Q8TC71"/>
    </source>
</evidence>
<evidence type="ECO:0000255" key="3"/>
<evidence type="ECO:0000256" key="4">
    <source>
        <dbReference type="SAM" id="MobiDB-lite"/>
    </source>
</evidence>
<evidence type="ECO:0000305" key="5"/>
<sequence>MADNLRKLVSTESLRSMQDKLENWLREYNNNSCDQNLNYCLELIEQVAKVQGQLFGILTTAAQEGGHYDGVETIKSRLLPWLEASFTAASLGKPVDSKIPSLQDTFDKERQKESVIRDRNIHQLDADLNTTRNQLNQVQDDLAETEKTLEETKNRSAISLLAAEEEINQLRKQLKCLQAQEESRHRPPEHRSSEKRGSERRRVEPRGADRCGAAQRKAEEICDYEKQLRTLKDEIAVLSAEKSVLQGRSTRSRSPSPASCSRSRSHSHSRSRSHSHSRSGSHSRSHSRNHSRSRSASPSTAVSGVRSPSPNRAKLSSVARKAALLSRFSDAYSQARLDAQCLLRRCIDKAETVQRIIYIATVEAFHVAKMAFRHFKIRVRKSLTPSYAGSNDFEDAVLDYIICHLDLYDSQSSVNDVIRAMNVNPKISFPPEVDFCLLSNFIQEICCIAFAMQTLDPPLDIAFGADGEIFNDCKYRRSYDSDFTAPLVFYHVWPALMENDCVIMKGEAVTRRGAFWNSVRSVTRCRSRSLSPICPRSRVGLSTISRSRSPSPIRCGLPRF</sequence>